<proteinExistence type="evidence at protein level"/>
<keyword id="KW-0002">3D-structure</keyword>
<keyword id="KW-0007">Acetylation</keyword>
<keyword id="KW-0249">Electron transport</keyword>
<keyword id="KW-0472">Membrane</keyword>
<keyword id="KW-0496">Mitochondrion</keyword>
<keyword id="KW-0999">Mitochondrion inner membrane</keyword>
<keyword id="KW-1185">Reference proteome</keyword>
<keyword id="KW-0679">Respiratory chain</keyword>
<keyword id="KW-0813">Transport</keyword>
<gene>
    <name type="primary">CIB22</name>
    <name type="ordered locus">At4g34700</name>
    <name type="ORF">T4L20_280</name>
</gene>
<evidence type="ECO:0000250" key="1"/>
<evidence type="ECO:0000269" key="2">
    <source>
    </source>
</evidence>
<evidence type="ECO:0000305" key="3"/>
<evidence type="ECO:0007744" key="4">
    <source>
    </source>
</evidence>
<evidence type="ECO:0007829" key="5">
    <source>
        <dbReference type="PDB" id="8BEH"/>
    </source>
</evidence>
<dbReference type="EMBL" id="AL023094">
    <property type="protein sequence ID" value="CAA18849.1"/>
    <property type="status" value="ALT_SEQ"/>
    <property type="molecule type" value="Genomic_DNA"/>
</dbReference>
<dbReference type="EMBL" id="AL161586">
    <property type="protein sequence ID" value="CAB80187.1"/>
    <property type="status" value="ALT_SEQ"/>
    <property type="molecule type" value="Genomic_DNA"/>
</dbReference>
<dbReference type="EMBL" id="CP002687">
    <property type="protein sequence ID" value="AEE86412.1"/>
    <property type="molecule type" value="Genomic_DNA"/>
</dbReference>
<dbReference type="EMBL" id="AF412069">
    <property type="protein sequence ID" value="AAL06522.1"/>
    <property type="molecule type" value="mRNA"/>
</dbReference>
<dbReference type="EMBL" id="BT001011">
    <property type="protein sequence ID" value="AAN46765.1"/>
    <property type="molecule type" value="mRNA"/>
</dbReference>
<dbReference type="EMBL" id="AY085825">
    <property type="protein sequence ID" value="AAM63041.1"/>
    <property type="molecule type" value="mRNA"/>
</dbReference>
<dbReference type="EMBL" id="AK221137">
    <property type="protein sequence ID" value="BAD95113.1"/>
    <property type="molecule type" value="mRNA"/>
</dbReference>
<dbReference type="PIR" id="T05290">
    <property type="entry name" value="T05290"/>
</dbReference>
<dbReference type="RefSeq" id="NP_567970.1">
    <property type="nucleotide sequence ID" value="NM_119636.4"/>
</dbReference>
<dbReference type="PDB" id="7A23">
    <property type="method" value="EM"/>
    <property type="resolution" value="3.70 A"/>
    <property type="chains" value="d=1-117"/>
</dbReference>
<dbReference type="PDB" id="7AQW">
    <property type="method" value="EM"/>
    <property type="resolution" value="3.17 A"/>
    <property type="chains" value="n=1-117"/>
</dbReference>
<dbReference type="PDB" id="7AR7">
    <property type="method" value="EM"/>
    <property type="resolution" value="3.72 A"/>
    <property type="chains" value="n=7-115"/>
</dbReference>
<dbReference type="PDB" id="7AR8">
    <property type="method" value="EM"/>
    <property type="resolution" value="3.53 A"/>
    <property type="chains" value="n=1-117"/>
</dbReference>
<dbReference type="PDB" id="7ARB">
    <property type="method" value="EM"/>
    <property type="resolution" value="3.41 A"/>
    <property type="chains" value="n=1-117"/>
</dbReference>
<dbReference type="PDB" id="8BEH">
    <property type="method" value="EM"/>
    <property type="resolution" value="2.29 A"/>
    <property type="chains" value="n=1-117"/>
</dbReference>
<dbReference type="PDB" id="8BPX">
    <property type="method" value="EM"/>
    <property type="resolution" value="2.09 A"/>
    <property type="chains" value="n=1-117"/>
</dbReference>
<dbReference type="PDB" id="8BQ5">
    <property type="method" value="EM"/>
    <property type="resolution" value="2.73 A"/>
    <property type="chains" value="n=1-117"/>
</dbReference>
<dbReference type="PDB" id="8BQ6">
    <property type="method" value="EM"/>
    <property type="resolution" value="2.80 A"/>
    <property type="chains" value="n=1-117"/>
</dbReference>
<dbReference type="PDBsum" id="7A23"/>
<dbReference type="PDBsum" id="7AQW"/>
<dbReference type="PDBsum" id="7AR7"/>
<dbReference type="PDBsum" id="7AR8"/>
<dbReference type="PDBsum" id="7ARB"/>
<dbReference type="PDBsum" id="8BEH"/>
<dbReference type="PDBsum" id="8BPX"/>
<dbReference type="PDBsum" id="8BQ5"/>
<dbReference type="PDBsum" id="8BQ6"/>
<dbReference type="EMDB" id="EMD-11614"/>
<dbReference type="EMDB" id="EMD-11874"/>
<dbReference type="EMDB" id="EMD-11875"/>
<dbReference type="EMDB" id="EMD-11876"/>
<dbReference type="EMDB" id="EMD-11878"/>
<dbReference type="EMDB" id="EMD-16003"/>
<dbReference type="EMDB" id="EMD-16168"/>
<dbReference type="EMDB" id="EMD-16171"/>
<dbReference type="EMDB" id="EMD-16172"/>
<dbReference type="SMR" id="Q945M1"/>
<dbReference type="BioGRID" id="14904">
    <property type="interactions" value="5"/>
</dbReference>
<dbReference type="FunCoup" id="Q945M1">
    <property type="interactions" value="3285"/>
</dbReference>
<dbReference type="IntAct" id="Q945M1">
    <property type="interactions" value="3"/>
</dbReference>
<dbReference type="STRING" id="3702.Q945M1"/>
<dbReference type="TCDB" id="3.D.1.6.3">
    <property type="family name" value="the h+ or na+-translocating nadh dehydrogenase (ndh) family"/>
</dbReference>
<dbReference type="iPTMnet" id="Q945M1"/>
<dbReference type="SwissPalm" id="Q945M1"/>
<dbReference type="PaxDb" id="3702-AT4G34700.1"/>
<dbReference type="ProteomicsDB" id="236821"/>
<dbReference type="EnsemblPlants" id="AT4G34700.1">
    <property type="protein sequence ID" value="AT4G34700.1"/>
    <property type="gene ID" value="AT4G34700"/>
</dbReference>
<dbReference type="GeneID" id="829622"/>
<dbReference type="Gramene" id="AT4G34700.1">
    <property type="protein sequence ID" value="AT4G34700.1"/>
    <property type="gene ID" value="AT4G34700"/>
</dbReference>
<dbReference type="KEGG" id="ath:AT4G34700"/>
<dbReference type="Araport" id="AT4G34700"/>
<dbReference type="TAIR" id="AT4G34700">
    <property type="gene designation" value="CIB22"/>
</dbReference>
<dbReference type="eggNOG" id="KOG3466">
    <property type="taxonomic scope" value="Eukaryota"/>
</dbReference>
<dbReference type="HOGENOM" id="CLU_108081_1_0_1"/>
<dbReference type="InParanoid" id="Q945M1"/>
<dbReference type="OMA" id="KWERNAP"/>
<dbReference type="PhylomeDB" id="Q945M1"/>
<dbReference type="PRO" id="PR:Q945M1"/>
<dbReference type="Proteomes" id="UP000006548">
    <property type="component" value="Chromosome 4"/>
</dbReference>
<dbReference type="ExpressionAtlas" id="Q945M1">
    <property type="expression patterns" value="baseline and differential"/>
</dbReference>
<dbReference type="GO" id="GO:0005743">
    <property type="term" value="C:mitochondrial inner membrane"/>
    <property type="evidence" value="ECO:0007669"/>
    <property type="project" value="UniProtKB-SubCell"/>
</dbReference>
<dbReference type="GO" id="GO:0031966">
    <property type="term" value="C:mitochondrial membrane"/>
    <property type="evidence" value="ECO:0000314"/>
    <property type="project" value="TAIR"/>
</dbReference>
<dbReference type="GO" id="GO:0005739">
    <property type="term" value="C:mitochondrion"/>
    <property type="evidence" value="ECO:0000314"/>
    <property type="project" value="TAIR"/>
</dbReference>
<dbReference type="GO" id="GO:0000325">
    <property type="term" value="C:plant-type vacuole"/>
    <property type="evidence" value="ECO:0007005"/>
    <property type="project" value="TAIR"/>
</dbReference>
<dbReference type="GO" id="GO:0005886">
    <property type="term" value="C:plasma membrane"/>
    <property type="evidence" value="ECO:0007005"/>
    <property type="project" value="TAIR"/>
</dbReference>
<dbReference type="GO" id="GO:0045271">
    <property type="term" value="C:respiratory chain complex I"/>
    <property type="evidence" value="ECO:0000314"/>
    <property type="project" value="TAIR"/>
</dbReference>
<dbReference type="GO" id="GO:0005975">
    <property type="term" value="P:carbohydrate metabolic process"/>
    <property type="evidence" value="ECO:0000315"/>
    <property type="project" value="TAIR"/>
</dbReference>
<dbReference type="GO" id="GO:0006120">
    <property type="term" value="P:mitochondrial electron transport, NADH to ubiquinone"/>
    <property type="evidence" value="ECO:0007669"/>
    <property type="project" value="InterPro"/>
</dbReference>
<dbReference type="GO" id="GO:0009853">
    <property type="term" value="P:photorespiration"/>
    <property type="evidence" value="ECO:0000304"/>
    <property type="project" value="TAIR"/>
</dbReference>
<dbReference type="CDD" id="cd20263">
    <property type="entry name" value="Complex1_LYR_NDUFB9_LYRM3"/>
    <property type="match status" value="1"/>
</dbReference>
<dbReference type="InterPro" id="IPR045292">
    <property type="entry name" value="Complex1_LYR_NDUFB9_LYRM3"/>
</dbReference>
<dbReference type="InterPro" id="IPR033034">
    <property type="entry name" value="NDUFB9"/>
</dbReference>
<dbReference type="PANTHER" id="PTHR12868:SF0">
    <property type="entry name" value="NADH DEHYDROGENASE [UBIQUINONE] 1 BETA SUBCOMPLEX SUBUNIT 9"/>
    <property type="match status" value="1"/>
</dbReference>
<dbReference type="PANTHER" id="PTHR12868">
    <property type="entry name" value="NADH-UBIQUINONE OXIDOREDUCTASE B22 SUBUNIT"/>
    <property type="match status" value="1"/>
</dbReference>
<protein>
    <recommendedName>
        <fullName>NADH dehydrogenase [ubiquinone] 1 beta subcomplex subunit 9</fullName>
    </recommendedName>
    <alternativeName>
        <fullName>B22 subunit of eukaryotic mitochondrial complex I</fullName>
    </alternativeName>
    <alternativeName>
        <fullName>Complex I-B22</fullName>
        <shortName>AtCIB22</shortName>
        <shortName>CI-B22</shortName>
    </alternativeName>
    <alternativeName>
        <fullName>NADH-ubiquinone oxidoreductase B22 subunit</fullName>
    </alternativeName>
</protein>
<comment type="function">
    <text evidence="1 2">Accessory subunit of the mitochondrial membrane respiratory chain NADH dehydrogenase (Complex I), that is believed to be not involved in catalysis. Complex I functions in the transfer of electrons from NADH to the respiratory chain. The immediate electron acceptor for the enzyme is believed to be ubiquinone (By similarity). Is required for correct plant growth and development.</text>
</comment>
<comment type="subunit">
    <text>Complex I is composed of at least 49 different subunits.</text>
</comment>
<comment type="subcellular location">
    <subcellularLocation>
        <location evidence="2">Mitochondrion inner membrane</location>
        <topology evidence="2">Peripheral membrane protein</topology>
        <orientation evidence="2">Matrix side</orientation>
    </subcellularLocation>
</comment>
<comment type="tissue specificity">
    <text evidence="2">Expressed in roots, stems, flowers, rosette leaves, cauline leaves and siliques, with the highest expression in the stems.</text>
</comment>
<comment type="disruption phenotype">
    <text evidence="2">Shorter roots, smaller plants and delayed flowering.</text>
</comment>
<comment type="similarity">
    <text evidence="3">Belongs to the complex I LYR family.</text>
</comment>
<comment type="sequence caution" evidence="3">
    <conflict type="erroneous gene model prediction">
        <sequence resource="EMBL-CDS" id="CAA18849"/>
    </conflict>
</comment>
<comment type="sequence caution" evidence="3">
    <conflict type="erroneous gene model prediction">
        <sequence resource="EMBL-CDS" id="CAB80187"/>
    </conflict>
</comment>
<reference key="1">
    <citation type="journal article" date="1999" name="Nature">
        <title>Sequence and analysis of chromosome 4 of the plant Arabidopsis thaliana.</title>
        <authorList>
            <person name="Mayer K.F.X."/>
            <person name="Schueller C."/>
            <person name="Wambutt R."/>
            <person name="Murphy G."/>
            <person name="Volckaert G."/>
            <person name="Pohl T."/>
            <person name="Duesterhoeft A."/>
            <person name="Stiekema W."/>
            <person name="Entian K.-D."/>
            <person name="Terryn N."/>
            <person name="Harris B."/>
            <person name="Ansorge W."/>
            <person name="Brandt P."/>
            <person name="Grivell L.A."/>
            <person name="Rieger M."/>
            <person name="Weichselgartner M."/>
            <person name="de Simone V."/>
            <person name="Obermaier B."/>
            <person name="Mache R."/>
            <person name="Mueller M."/>
            <person name="Kreis M."/>
            <person name="Delseny M."/>
            <person name="Puigdomenech P."/>
            <person name="Watson M."/>
            <person name="Schmidtheini T."/>
            <person name="Reichert B."/>
            <person name="Portetelle D."/>
            <person name="Perez-Alonso M."/>
            <person name="Boutry M."/>
            <person name="Bancroft I."/>
            <person name="Vos P."/>
            <person name="Hoheisel J."/>
            <person name="Zimmermann W."/>
            <person name="Wedler H."/>
            <person name="Ridley P."/>
            <person name="Langham S.-A."/>
            <person name="McCullagh B."/>
            <person name="Bilham L."/>
            <person name="Robben J."/>
            <person name="van der Schueren J."/>
            <person name="Grymonprez B."/>
            <person name="Chuang Y.-J."/>
            <person name="Vandenbussche F."/>
            <person name="Braeken M."/>
            <person name="Weltjens I."/>
            <person name="Voet M."/>
            <person name="Bastiaens I."/>
            <person name="Aert R."/>
            <person name="Defoor E."/>
            <person name="Weitzenegger T."/>
            <person name="Bothe G."/>
            <person name="Ramsperger U."/>
            <person name="Hilbert H."/>
            <person name="Braun M."/>
            <person name="Holzer E."/>
            <person name="Brandt A."/>
            <person name="Peters S."/>
            <person name="van Staveren M."/>
            <person name="Dirkse W."/>
            <person name="Mooijman P."/>
            <person name="Klein Lankhorst R."/>
            <person name="Rose M."/>
            <person name="Hauf J."/>
            <person name="Koetter P."/>
            <person name="Berneiser S."/>
            <person name="Hempel S."/>
            <person name="Feldpausch M."/>
            <person name="Lamberth S."/>
            <person name="Van den Daele H."/>
            <person name="De Keyser A."/>
            <person name="Buysshaert C."/>
            <person name="Gielen J."/>
            <person name="Villarroel R."/>
            <person name="De Clercq R."/>
            <person name="van Montagu M."/>
            <person name="Rogers J."/>
            <person name="Cronin A."/>
            <person name="Quail M.A."/>
            <person name="Bray-Allen S."/>
            <person name="Clark L."/>
            <person name="Doggett J."/>
            <person name="Hall S."/>
            <person name="Kay M."/>
            <person name="Lennard N."/>
            <person name="McLay K."/>
            <person name="Mayes R."/>
            <person name="Pettett A."/>
            <person name="Rajandream M.A."/>
            <person name="Lyne M."/>
            <person name="Benes V."/>
            <person name="Rechmann S."/>
            <person name="Borkova D."/>
            <person name="Bloecker H."/>
            <person name="Scharfe M."/>
            <person name="Grimm M."/>
            <person name="Loehnert T.-H."/>
            <person name="Dose S."/>
            <person name="de Haan M."/>
            <person name="Maarse A.C."/>
            <person name="Schaefer M."/>
            <person name="Mueller-Auer S."/>
            <person name="Gabel C."/>
            <person name="Fuchs M."/>
            <person name="Fartmann B."/>
            <person name="Granderath K."/>
            <person name="Dauner D."/>
            <person name="Herzl A."/>
            <person name="Neumann S."/>
            <person name="Argiriou A."/>
            <person name="Vitale D."/>
            <person name="Liguori R."/>
            <person name="Piravandi E."/>
            <person name="Massenet O."/>
            <person name="Quigley F."/>
            <person name="Clabauld G."/>
            <person name="Muendlein A."/>
            <person name="Felber R."/>
            <person name="Schnabl S."/>
            <person name="Hiller R."/>
            <person name="Schmidt W."/>
            <person name="Lecharny A."/>
            <person name="Aubourg S."/>
            <person name="Chefdor F."/>
            <person name="Cooke R."/>
            <person name="Berger C."/>
            <person name="Monfort A."/>
            <person name="Casacuberta E."/>
            <person name="Gibbons T."/>
            <person name="Weber N."/>
            <person name="Vandenbol M."/>
            <person name="Bargues M."/>
            <person name="Terol J."/>
            <person name="Torres A."/>
            <person name="Perez-Perez A."/>
            <person name="Purnelle B."/>
            <person name="Bent E."/>
            <person name="Johnson S."/>
            <person name="Tacon D."/>
            <person name="Jesse T."/>
            <person name="Heijnen L."/>
            <person name="Schwarz S."/>
            <person name="Scholler P."/>
            <person name="Heber S."/>
            <person name="Francs P."/>
            <person name="Bielke C."/>
            <person name="Frishman D."/>
            <person name="Haase D."/>
            <person name="Lemcke K."/>
            <person name="Mewes H.-W."/>
            <person name="Stocker S."/>
            <person name="Zaccaria P."/>
            <person name="Bevan M."/>
            <person name="Wilson R.K."/>
            <person name="de la Bastide M."/>
            <person name="Habermann K."/>
            <person name="Parnell L."/>
            <person name="Dedhia N."/>
            <person name="Gnoj L."/>
            <person name="Schutz K."/>
            <person name="Huang E."/>
            <person name="Spiegel L."/>
            <person name="Sekhon M."/>
            <person name="Murray J."/>
            <person name="Sheet P."/>
            <person name="Cordes M."/>
            <person name="Abu-Threideh J."/>
            <person name="Stoneking T."/>
            <person name="Kalicki J."/>
            <person name="Graves T."/>
            <person name="Harmon G."/>
            <person name="Edwards J."/>
            <person name="Latreille P."/>
            <person name="Courtney L."/>
            <person name="Cloud J."/>
            <person name="Abbott A."/>
            <person name="Scott K."/>
            <person name="Johnson D."/>
            <person name="Minx P."/>
            <person name="Bentley D."/>
            <person name="Fulton B."/>
            <person name="Miller N."/>
            <person name="Greco T."/>
            <person name="Kemp K."/>
            <person name="Kramer J."/>
            <person name="Fulton L."/>
            <person name="Mardis E."/>
            <person name="Dante M."/>
            <person name="Pepin K."/>
            <person name="Hillier L.W."/>
            <person name="Nelson J."/>
            <person name="Spieth J."/>
            <person name="Ryan E."/>
            <person name="Andrews S."/>
            <person name="Geisel C."/>
            <person name="Layman D."/>
            <person name="Du H."/>
            <person name="Ali J."/>
            <person name="Berghoff A."/>
            <person name="Jones K."/>
            <person name="Drone K."/>
            <person name="Cotton M."/>
            <person name="Joshu C."/>
            <person name="Antonoiu B."/>
            <person name="Zidanic M."/>
            <person name="Strong C."/>
            <person name="Sun H."/>
            <person name="Lamar B."/>
            <person name="Yordan C."/>
            <person name="Ma P."/>
            <person name="Zhong J."/>
            <person name="Preston R."/>
            <person name="Vil D."/>
            <person name="Shekher M."/>
            <person name="Matero A."/>
            <person name="Shah R."/>
            <person name="Swaby I.K."/>
            <person name="O'Shaughnessy A."/>
            <person name="Rodriguez M."/>
            <person name="Hoffman J."/>
            <person name="Till S."/>
            <person name="Granat S."/>
            <person name="Shohdy N."/>
            <person name="Hasegawa A."/>
            <person name="Hameed A."/>
            <person name="Lodhi M."/>
            <person name="Johnson A."/>
            <person name="Chen E."/>
            <person name="Marra M.A."/>
            <person name="Martienssen R."/>
            <person name="McCombie W.R."/>
        </authorList>
    </citation>
    <scope>NUCLEOTIDE SEQUENCE [LARGE SCALE GENOMIC DNA]</scope>
    <source>
        <strain>cv. Columbia</strain>
    </source>
</reference>
<reference key="2">
    <citation type="journal article" date="2017" name="Plant J.">
        <title>Araport11: a complete reannotation of the Arabidopsis thaliana reference genome.</title>
        <authorList>
            <person name="Cheng C.Y."/>
            <person name="Krishnakumar V."/>
            <person name="Chan A.P."/>
            <person name="Thibaud-Nissen F."/>
            <person name="Schobel S."/>
            <person name="Town C.D."/>
        </authorList>
    </citation>
    <scope>GENOME REANNOTATION</scope>
    <source>
        <strain>cv. Columbia</strain>
    </source>
</reference>
<reference key="3">
    <citation type="journal article" date="2003" name="Science">
        <title>Empirical analysis of transcriptional activity in the Arabidopsis genome.</title>
        <authorList>
            <person name="Yamada K."/>
            <person name="Lim J."/>
            <person name="Dale J.M."/>
            <person name="Chen H."/>
            <person name="Shinn P."/>
            <person name="Palm C.J."/>
            <person name="Southwick A.M."/>
            <person name="Wu H.C."/>
            <person name="Kim C.J."/>
            <person name="Nguyen M."/>
            <person name="Pham P.K."/>
            <person name="Cheuk R.F."/>
            <person name="Karlin-Newmann G."/>
            <person name="Liu S.X."/>
            <person name="Lam B."/>
            <person name="Sakano H."/>
            <person name="Wu T."/>
            <person name="Yu G."/>
            <person name="Miranda M."/>
            <person name="Quach H.L."/>
            <person name="Tripp M."/>
            <person name="Chang C.H."/>
            <person name="Lee J.M."/>
            <person name="Toriumi M.J."/>
            <person name="Chan M.M."/>
            <person name="Tang C.C."/>
            <person name="Onodera C.S."/>
            <person name="Deng J.M."/>
            <person name="Akiyama K."/>
            <person name="Ansari Y."/>
            <person name="Arakawa T."/>
            <person name="Banh J."/>
            <person name="Banno F."/>
            <person name="Bowser L."/>
            <person name="Brooks S.Y."/>
            <person name="Carninci P."/>
            <person name="Chao Q."/>
            <person name="Choy N."/>
            <person name="Enju A."/>
            <person name="Goldsmith A.D."/>
            <person name="Gurjal M."/>
            <person name="Hansen N.F."/>
            <person name="Hayashizaki Y."/>
            <person name="Johnson-Hopson C."/>
            <person name="Hsuan V.W."/>
            <person name="Iida K."/>
            <person name="Karnes M."/>
            <person name="Khan S."/>
            <person name="Koesema E."/>
            <person name="Ishida J."/>
            <person name="Jiang P.X."/>
            <person name="Jones T."/>
            <person name="Kawai J."/>
            <person name="Kamiya A."/>
            <person name="Meyers C."/>
            <person name="Nakajima M."/>
            <person name="Narusaka M."/>
            <person name="Seki M."/>
            <person name="Sakurai T."/>
            <person name="Satou M."/>
            <person name="Tamse R."/>
            <person name="Vaysberg M."/>
            <person name="Wallender E.K."/>
            <person name="Wong C."/>
            <person name="Yamamura Y."/>
            <person name="Yuan S."/>
            <person name="Shinozaki K."/>
            <person name="Davis R.W."/>
            <person name="Theologis A."/>
            <person name="Ecker J.R."/>
        </authorList>
    </citation>
    <scope>NUCLEOTIDE SEQUENCE [LARGE SCALE MRNA]</scope>
    <source>
        <strain>cv. Columbia</strain>
    </source>
</reference>
<reference key="4">
    <citation type="submission" date="2002-03" db="EMBL/GenBank/DDBJ databases">
        <title>Full-length cDNA from Arabidopsis thaliana.</title>
        <authorList>
            <person name="Brover V.V."/>
            <person name="Troukhan M.E."/>
            <person name="Alexandrov N.A."/>
            <person name="Lu Y.-P."/>
            <person name="Flavell R.B."/>
            <person name="Feldmann K.A."/>
        </authorList>
    </citation>
    <scope>NUCLEOTIDE SEQUENCE [LARGE SCALE MRNA]</scope>
</reference>
<reference key="5">
    <citation type="submission" date="2005-03" db="EMBL/GenBank/DDBJ databases">
        <title>Large-scale analysis of RIKEN Arabidopsis full-length (RAFL) cDNAs.</title>
        <authorList>
            <person name="Totoki Y."/>
            <person name="Seki M."/>
            <person name="Ishida J."/>
            <person name="Nakajima M."/>
            <person name="Enju A."/>
            <person name="Kamiya A."/>
            <person name="Narusaka M."/>
            <person name="Shin-i T."/>
            <person name="Nakagawa M."/>
            <person name="Sakamoto N."/>
            <person name="Oishi K."/>
            <person name="Kohara Y."/>
            <person name="Kobayashi M."/>
            <person name="Toyoda A."/>
            <person name="Sakaki Y."/>
            <person name="Sakurai T."/>
            <person name="Iida K."/>
            <person name="Akiyama K."/>
            <person name="Satou M."/>
            <person name="Toyoda T."/>
            <person name="Konagaya A."/>
            <person name="Carninci P."/>
            <person name="Kawai J."/>
            <person name="Hayashizaki Y."/>
            <person name="Shinozaki K."/>
        </authorList>
    </citation>
    <scope>NUCLEOTIDE SEQUENCE [LARGE SCALE MRNA] OF 58-117</scope>
    <source>
        <strain>cv. Columbia</strain>
    </source>
</reference>
<reference key="6">
    <citation type="journal article" date="2010" name="J. Genet. Genomics">
        <title>A nuclear-encoded mitochondrial gene AtCIB22 is essential for plant development in Arabidopsis.</title>
        <authorList>
            <person name="Han L."/>
            <person name="Qin G."/>
            <person name="Kang D."/>
            <person name="Chen Z."/>
            <person name="Gu H."/>
            <person name="Qu L.J."/>
        </authorList>
    </citation>
    <scope>FUNCTION</scope>
    <scope>DISRUPTION PHENOTYPE</scope>
    <scope>TISSUE SPECIFICITY</scope>
    <scope>SUBCELLULAR LOCATION</scope>
</reference>
<reference key="7">
    <citation type="journal article" date="2012" name="Mol. Cell. Proteomics">
        <title>Comparative large-scale characterisation of plant vs. mammal proteins reveals similar and idiosyncratic N-alpha acetylation features.</title>
        <authorList>
            <person name="Bienvenut W.V."/>
            <person name="Sumpton D."/>
            <person name="Martinez A."/>
            <person name="Lilla S."/>
            <person name="Espagne C."/>
            <person name="Meinnel T."/>
            <person name="Giglione C."/>
        </authorList>
    </citation>
    <scope>ACETYLATION [LARGE SCALE ANALYSIS] AT SER-2</scope>
    <scope>CLEAVAGE OF INITIATOR METHIONINE [LARGE SCALE ANALYSIS]</scope>
    <scope>IDENTIFICATION BY MASS SPECTROMETRY [LARGE SCALE ANALYSIS]</scope>
</reference>
<sequence>MSGVSTAAYFARRAAQKERVRILYRRALKDTLNWAVHRHIFYRDASDLREKFNVNQDVEDVDRIDKLIAHGEAEYNKWRHPDPYIVPWAPGGSKFCRNPTPPAGIEIVYNYGLEDNP</sequence>
<name>NDUB9_ARATH</name>
<organism>
    <name type="scientific">Arabidopsis thaliana</name>
    <name type="common">Mouse-ear cress</name>
    <dbReference type="NCBI Taxonomy" id="3702"/>
    <lineage>
        <taxon>Eukaryota</taxon>
        <taxon>Viridiplantae</taxon>
        <taxon>Streptophyta</taxon>
        <taxon>Embryophyta</taxon>
        <taxon>Tracheophyta</taxon>
        <taxon>Spermatophyta</taxon>
        <taxon>Magnoliopsida</taxon>
        <taxon>eudicotyledons</taxon>
        <taxon>Gunneridae</taxon>
        <taxon>Pentapetalae</taxon>
        <taxon>rosids</taxon>
        <taxon>malvids</taxon>
        <taxon>Brassicales</taxon>
        <taxon>Brassicaceae</taxon>
        <taxon>Camelineae</taxon>
        <taxon>Arabidopsis</taxon>
    </lineage>
</organism>
<feature type="initiator methionine" description="Removed" evidence="4">
    <location>
        <position position="1"/>
    </location>
</feature>
<feature type="chain" id="PRO_0000410999" description="NADH dehydrogenase [ubiquinone] 1 beta subcomplex subunit 9">
    <location>
        <begin position="2"/>
        <end position="117"/>
    </location>
</feature>
<feature type="modified residue" description="N-acetylserine" evidence="4">
    <location>
        <position position="2"/>
    </location>
</feature>
<feature type="sequence conflict" description="In Ref. 4; AAM63041." evidence="3" ref="4">
    <original>V</original>
    <variation>A</variation>
    <location>
        <position position="54"/>
    </location>
</feature>
<feature type="helix" evidence="5">
    <location>
        <begin position="9"/>
        <end position="35"/>
    </location>
</feature>
<feature type="helix" evidence="5">
    <location>
        <begin position="38"/>
        <end position="55"/>
    </location>
</feature>
<feature type="helix" evidence="5">
    <location>
        <begin position="61"/>
        <end position="78"/>
    </location>
</feature>
<feature type="turn" evidence="5">
    <location>
        <begin position="93"/>
        <end position="96"/>
    </location>
</feature>
<accession>Q945M1</accession>
<accession>O65692</accession>
<accession>Q56Z32</accession>
<accession>Q8LDS9</accession>